<comment type="function">
    <text evidence="1">Could be involved in insertion of integral membrane proteins into the membrane.</text>
</comment>
<comment type="subcellular location">
    <subcellularLocation>
        <location evidence="1">Cell inner membrane</location>
        <topology evidence="1">Peripheral membrane protein</topology>
        <orientation evidence="1">Cytoplasmic side</orientation>
    </subcellularLocation>
</comment>
<comment type="similarity">
    <text evidence="1">Belongs to the UPF0161 family.</text>
</comment>
<proteinExistence type="inferred from homology"/>
<feature type="chain" id="PRO_1000013067" description="Putative membrane protein insertion efficiency factor">
    <location>
        <begin position="1"/>
        <end position="123"/>
    </location>
</feature>
<feature type="region of interest" description="Disordered" evidence="2">
    <location>
        <begin position="1"/>
        <end position="23"/>
    </location>
</feature>
<gene>
    <name type="ordered locus">BOV_1039</name>
</gene>
<name>YIDD_BRUO2</name>
<organism>
    <name type="scientific">Brucella ovis (strain ATCC 25840 / 63/290 / NCTC 10512)</name>
    <dbReference type="NCBI Taxonomy" id="444178"/>
    <lineage>
        <taxon>Bacteria</taxon>
        <taxon>Pseudomonadati</taxon>
        <taxon>Pseudomonadota</taxon>
        <taxon>Alphaproteobacteria</taxon>
        <taxon>Hyphomicrobiales</taxon>
        <taxon>Brucellaceae</taxon>
        <taxon>Brucella/Ochrobactrum group</taxon>
        <taxon>Brucella</taxon>
    </lineage>
</organism>
<keyword id="KW-0997">Cell inner membrane</keyword>
<keyword id="KW-1003">Cell membrane</keyword>
<keyword id="KW-0472">Membrane</keyword>
<evidence type="ECO:0000255" key="1">
    <source>
        <dbReference type="HAMAP-Rule" id="MF_00386"/>
    </source>
</evidence>
<evidence type="ECO:0000256" key="2">
    <source>
        <dbReference type="SAM" id="MobiDB-lite"/>
    </source>
</evidence>
<accession>A5VQK8</accession>
<protein>
    <recommendedName>
        <fullName evidence="1">Putative membrane protein insertion efficiency factor</fullName>
    </recommendedName>
</protein>
<sequence length="123" mass="14049">MGSCGGKHTGKGAPKPYSRNFTDPWRKTPGRLFGTALIRFYQITLSSLIGNSCRHLPTCSEYAYEAIARHGLWRGGWMGFFRVVRCGPFGTHGFDPVPRELSPDLKWYMPWRYWRCSASRTGK</sequence>
<dbReference type="EMBL" id="CP000708">
    <property type="protein sequence ID" value="ABQ61664.1"/>
    <property type="molecule type" value="Genomic_DNA"/>
</dbReference>
<dbReference type="KEGG" id="bov:BOV_1039"/>
<dbReference type="HOGENOM" id="CLU_144811_0_1_5"/>
<dbReference type="PhylomeDB" id="A5VQK8"/>
<dbReference type="Proteomes" id="UP000006383">
    <property type="component" value="Chromosome I"/>
</dbReference>
<dbReference type="GO" id="GO:0005886">
    <property type="term" value="C:plasma membrane"/>
    <property type="evidence" value="ECO:0007669"/>
    <property type="project" value="UniProtKB-SubCell"/>
</dbReference>
<dbReference type="HAMAP" id="MF_00386">
    <property type="entry name" value="UPF0161_YidD"/>
    <property type="match status" value="1"/>
</dbReference>
<dbReference type="InterPro" id="IPR002696">
    <property type="entry name" value="Membr_insert_effic_factor_YidD"/>
</dbReference>
<dbReference type="NCBIfam" id="TIGR00278">
    <property type="entry name" value="membrane protein insertion efficiency factor YidD"/>
    <property type="match status" value="1"/>
</dbReference>
<dbReference type="PANTHER" id="PTHR33383">
    <property type="entry name" value="MEMBRANE PROTEIN INSERTION EFFICIENCY FACTOR-RELATED"/>
    <property type="match status" value="1"/>
</dbReference>
<dbReference type="PANTHER" id="PTHR33383:SF1">
    <property type="entry name" value="MEMBRANE PROTEIN INSERTION EFFICIENCY FACTOR-RELATED"/>
    <property type="match status" value="1"/>
</dbReference>
<dbReference type="Pfam" id="PF01809">
    <property type="entry name" value="YidD"/>
    <property type="match status" value="1"/>
</dbReference>
<dbReference type="SMART" id="SM01234">
    <property type="entry name" value="Haemolytic"/>
    <property type="match status" value="1"/>
</dbReference>
<reference key="1">
    <citation type="journal article" date="2009" name="PLoS ONE">
        <title>Genome degradation in Brucella ovis corresponds with narrowing of its host range and tissue tropism.</title>
        <authorList>
            <person name="Tsolis R.M."/>
            <person name="Seshadri R."/>
            <person name="Santos R.L."/>
            <person name="Sangari F.J."/>
            <person name="Lobo J.M."/>
            <person name="de Jong M.F."/>
            <person name="Ren Q."/>
            <person name="Myers G."/>
            <person name="Brinkac L.M."/>
            <person name="Nelson W.C."/>
            <person name="Deboy R.T."/>
            <person name="Angiuoli S."/>
            <person name="Khouri H."/>
            <person name="Dimitrov G."/>
            <person name="Robinson J.R."/>
            <person name="Mulligan S."/>
            <person name="Walker R.L."/>
            <person name="Elzer P.E."/>
            <person name="Hassan K.A."/>
            <person name="Paulsen I.T."/>
        </authorList>
    </citation>
    <scope>NUCLEOTIDE SEQUENCE [LARGE SCALE GENOMIC DNA]</scope>
    <source>
        <strain>ATCC 25840 / 63/290 / NCTC 10512</strain>
    </source>
</reference>